<gene>
    <name evidence="1" type="primary">tam</name>
    <name type="ordered locus">ECIAI39_1782</name>
</gene>
<keyword id="KW-0963">Cytoplasm</keyword>
<keyword id="KW-0489">Methyltransferase</keyword>
<keyword id="KW-0949">S-adenosyl-L-methionine</keyword>
<keyword id="KW-0808">Transferase</keyword>
<feature type="chain" id="PRO_1000129252" description="Trans-aconitate 2-methyltransferase">
    <location>
        <begin position="1"/>
        <end position="252"/>
    </location>
</feature>
<evidence type="ECO:0000255" key="1">
    <source>
        <dbReference type="HAMAP-Rule" id="MF_00560"/>
    </source>
</evidence>
<comment type="function">
    <text evidence="1">Catalyzes the S-adenosylmethionine monomethyl esterification of trans-aconitate.</text>
</comment>
<comment type="catalytic activity">
    <reaction evidence="1">
        <text>trans-aconitate + S-adenosyl-L-methionine = (E)-3-(methoxycarbonyl)pent-2-enedioate + S-adenosyl-L-homocysteine</text>
        <dbReference type="Rhea" id="RHEA:14969"/>
        <dbReference type="ChEBI" id="CHEBI:15708"/>
        <dbReference type="ChEBI" id="CHEBI:57470"/>
        <dbReference type="ChEBI" id="CHEBI:57856"/>
        <dbReference type="ChEBI" id="CHEBI:59789"/>
        <dbReference type="EC" id="2.1.1.144"/>
    </reaction>
</comment>
<comment type="subcellular location">
    <subcellularLocation>
        <location evidence="1">Cytoplasm</location>
    </subcellularLocation>
</comment>
<comment type="similarity">
    <text evidence="1">Belongs to the methyltransferase superfamily. Tam family.</text>
</comment>
<accession>B7NIJ1</accession>
<dbReference type="EC" id="2.1.1.144" evidence="1"/>
<dbReference type="EMBL" id="CU928164">
    <property type="protein sequence ID" value="CAR17913.1"/>
    <property type="molecule type" value="Genomic_DNA"/>
</dbReference>
<dbReference type="RefSeq" id="WP_001286534.1">
    <property type="nucleotide sequence ID" value="NC_011750.1"/>
</dbReference>
<dbReference type="RefSeq" id="YP_002407768.1">
    <property type="nucleotide sequence ID" value="NC_011750.1"/>
</dbReference>
<dbReference type="SMR" id="B7NIJ1"/>
<dbReference type="STRING" id="585057.ECIAI39_1782"/>
<dbReference type="KEGG" id="ect:ECIAI39_1782"/>
<dbReference type="PATRIC" id="fig|585057.6.peg.1856"/>
<dbReference type="HOGENOM" id="CLU_037990_5_2_6"/>
<dbReference type="Proteomes" id="UP000000749">
    <property type="component" value="Chromosome"/>
</dbReference>
<dbReference type="GO" id="GO:0005737">
    <property type="term" value="C:cytoplasm"/>
    <property type="evidence" value="ECO:0007669"/>
    <property type="project" value="UniProtKB-SubCell"/>
</dbReference>
<dbReference type="GO" id="GO:0030798">
    <property type="term" value="F:trans-aconitate 2-methyltransferase activity"/>
    <property type="evidence" value="ECO:0007669"/>
    <property type="project" value="UniProtKB-UniRule"/>
</dbReference>
<dbReference type="GO" id="GO:0032259">
    <property type="term" value="P:methylation"/>
    <property type="evidence" value="ECO:0007669"/>
    <property type="project" value="UniProtKB-KW"/>
</dbReference>
<dbReference type="CDD" id="cd02440">
    <property type="entry name" value="AdoMet_MTases"/>
    <property type="match status" value="1"/>
</dbReference>
<dbReference type="Gene3D" id="1.10.150.290">
    <property type="entry name" value="S-adenosyl-L-methionine-dependent methyltransferases"/>
    <property type="match status" value="1"/>
</dbReference>
<dbReference type="Gene3D" id="3.40.50.150">
    <property type="entry name" value="Vaccinia Virus protein VP39"/>
    <property type="match status" value="1"/>
</dbReference>
<dbReference type="HAMAP" id="MF_00560">
    <property type="entry name" value="Tran_acon_Me_trans"/>
    <property type="match status" value="1"/>
</dbReference>
<dbReference type="InterPro" id="IPR041698">
    <property type="entry name" value="Methyltransf_25"/>
</dbReference>
<dbReference type="InterPro" id="IPR029063">
    <property type="entry name" value="SAM-dependent_MTases_sf"/>
</dbReference>
<dbReference type="InterPro" id="IPR023506">
    <property type="entry name" value="Trans-aconitate_MeTrfase"/>
</dbReference>
<dbReference type="InterPro" id="IPR023149">
    <property type="entry name" value="Trans_acon_MeTrfase_C"/>
</dbReference>
<dbReference type="NCBIfam" id="NF002463">
    <property type="entry name" value="PRK01683.1"/>
    <property type="match status" value="1"/>
</dbReference>
<dbReference type="PANTHER" id="PTHR43861:SF1">
    <property type="entry name" value="TRANS-ACONITATE 2-METHYLTRANSFERASE"/>
    <property type="match status" value="1"/>
</dbReference>
<dbReference type="PANTHER" id="PTHR43861">
    <property type="entry name" value="TRANS-ACONITATE 2-METHYLTRANSFERASE-RELATED"/>
    <property type="match status" value="1"/>
</dbReference>
<dbReference type="Pfam" id="PF13649">
    <property type="entry name" value="Methyltransf_25"/>
    <property type="match status" value="1"/>
</dbReference>
<dbReference type="SUPFAM" id="SSF53335">
    <property type="entry name" value="S-adenosyl-L-methionine-dependent methyltransferases"/>
    <property type="match status" value="1"/>
</dbReference>
<sequence>MSDWNPSLYLHFAAERSRPAMELLARVPLENIEYVADLGCGPGNSTALLHQRWPAARITGIDSSPAMIAEARSALPDCQFVEADIRNWQPEQALDLIFANASLQWLPDHYELFPHLVSLLNSHGVLAVQMPDNWLEPTHVLMREVAWEQNYPDRGREPLAGVHAYYDILSEAGCEVDIWRTTYYHQMPSHQAIIDWVTATGLRPWLQDLTESEQQHFLTRYHQMLEEQYPLQENGEILLAFPRLFIVARRTE</sequence>
<name>TAM_ECO7I</name>
<organism>
    <name type="scientific">Escherichia coli O7:K1 (strain IAI39 / ExPEC)</name>
    <dbReference type="NCBI Taxonomy" id="585057"/>
    <lineage>
        <taxon>Bacteria</taxon>
        <taxon>Pseudomonadati</taxon>
        <taxon>Pseudomonadota</taxon>
        <taxon>Gammaproteobacteria</taxon>
        <taxon>Enterobacterales</taxon>
        <taxon>Enterobacteriaceae</taxon>
        <taxon>Escherichia</taxon>
    </lineage>
</organism>
<protein>
    <recommendedName>
        <fullName evidence="1">Trans-aconitate 2-methyltransferase</fullName>
        <ecNumber evidence="1">2.1.1.144</ecNumber>
    </recommendedName>
</protein>
<proteinExistence type="inferred from homology"/>
<reference key="1">
    <citation type="journal article" date="2009" name="PLoS Genet.">
        <title>Organised genome dynamics in the Escherichia coli species results in highly diverse adaptive paths.</title>
        <authorList>
            <person name="Touchon M."/>
            <person name="Hoede C."/>
            <person name="Tenaillon O."/>
            <person name="Barbe V."/>
            <person name="Baeriswyl S."/>
            <person name="Bidet P."/>
            <person name="Bingen E."/>
            <person name="Bonacorsi S."/>
            <person name="Bouchier C."/>
            <person name="Bouvet O."/>
            <person name="Calteau A."/>
            <person name="Chiapello H."/>
            <person name="Clermont O."/>
            <person name="Cruveiller S."/>
            <person name="Danchin A."/>
            <person name="Diard M."/>
            <person name="Dossat C."/>
            <person name="Karoui M.E."/>
            <person name="Frapy E."/>
            <person name="Garry L."/>
            <person name="Ghigo J.M."/>
            <person name="Gilles A.M."/>
            <person name="Johnson J."/>
            <person name="Le Bouguenec C."/>
            <person name="Lescat M."/>
            <person name="Mangenot S."/>
            <person name="Martinez-Jehanne V."/>
            <person name="Matic I."/>
            <person name="Nassif X."/>
            <person name="Oztas S."/>
            <person name="Petit M.A."/>
            <person name="Pichon C."/>
            <person name="Rouy Z."/>
            <person name="Ruf C.S."/>
            <person name="Schneider D."/>
            <person name="Tourret J."/>
            <person name="Vacherie B."/>
            <person name="Vallenet D."/>
            <person name="Medigue C."/>
            <person name="Rocha E.P.C."/>
            <person name="Denamur E."/>
        </authorList>
    </citation>
    <scope>NUCLEOTIDE SEQUENCE [LARGE SCALE GENOMIC DNA]</scope>
    <source>
        <strain>IAI39 / ExPEC</strain>
    </source>
</reference>